<accession>B9DPL6</accession>
<gene>
    <name evidence="1" type="primary">rpoZ</name>
    <name type="ordered locus">Sca_0827</name>
</gene>
<organism>
    <name type="scientific">Staphylococcus carnosus (strain TM300)</name>
    <dbReference type="NCBI Taxonomy" id="396513"/>
    <lineage>
        <taxon>Bacteria</taxon>
        <taxon>Bacillati</taxon>
        <taxon>Bacillota</taxon>
        <taxon>Bacilli</taxon>
        <taxon>Bacillales</taxon>
        <taxon>Staphylococcaceae</taxon>
        <taxon>Staphylococcus</taxon>
    </lineage>
</organism>
<keyword id="KW-0240">DNA-directed RNA polymerase</keyword>
<keyword id="KW-0548">Nucleotidyltransferase</keyword>
<keyword id="KW-1185">Reference proteome</keyword>
<keyword id="KW-0804">Transcription</keyword>
<keyword id="KW-0808">Transferase</keyword>
<reference key="1">
    <citation type="journal article" date="2009" name="Appl. Environ. Microbiol.">
        <title>Genome analysis of the meat starter culture bacterium Staphylococcus carnosus TM300.</title>
        <authorList>
            <person name="Rosenstein R."/>
            <person name="Nerz C."/>
            <person name="Biswas L."/>
            <person name="Resch A."/>
            <person name="Raddatz G."/>
            <person name="Schuster S.C."/>
            <person name="Goetz F."/>
        </authorList>
    </citation>
    <scope>NUCLEOTIDE SEQUENCE [LARGE SCALE GENOMIC DNA]</scope>
    <source>
        <strain>TM300</strain>
    </source>
</reference>
<dbReference type="EC" id="2.7.7.6" evidence="1"/>
<dbReference type="EMBL" id="AM295250">
    <property type="protein sequence ID" value="CAL27737.1"/>
    <property type="molecule type" value="Genomic_DNA"/>
</dbReference>
<dbReference type="RefSeq" id="WP_015900079.1">
    <property type="nucleotide sequence ID" value="NC_012121.1"/>
</dbReference>
<dbReference type="SMR" id="B9DPL6"/>
<dbReference type="GeneID" id="93793260"/>
<dbReference type="KEGG" id="sca:SCA_0827"/>
<dbReference type="eggNOG" id="COG1758">
    <property type="taxonomic scope" value="Bacteria"/>
</dbReference>
<dbReference type="HOGENOM" id="CLU_125406_6_0_9"/>
<dbReference type="OrthoDB" id="9815459at2"/>
<dbReference type="BioCyc" id="SCAR396513:SCA_RS04185-MONOMER"/>
<dbReference type="Proteomes" id="UP000000444">
    <property type="component" value="Chromosome"/>
</dbReference>
<dbReference type="GO" id="GO:0000428">
    <property type="term" value="C:DNA-directed RNA polymerase complex"/>
    <property type="evidence" value="ECO:0007669"/>
    <property type="project" value="UniProtKB-KW"/>
</dbReference>
<dbReference type="GO" id="GO:0003677">
    <property type="term" value="F:DNA binding"/>
    <property type="evidence" value="ECO:0007669"/>
    <property type="project" value="UniProtKB-UniRule"/>
</dbReference>
<dbReference type="GO" id="GO:0003899">
    <property type="term" value="F:DNA-directed RNA polymerase activity"/>
    <property type="evidence" value="ECO:0007669"/>
    <property type="project" value="UniProtKB-UniRule"/>
</dbReference>
<dbReference type="GO" id="GO:0006351">
    <property type="term" value="P:DNA-templated transcription"/>
    <property type="evidence" value="ECO:0007669"/>
    <property type="project" value="UniProtKB-UniRule"/>
</dbReference>
<dbReference type="Gene3D" id="3.90.940.10">
    <property type="match status" value="1"/>
</dbReference>
<dbReference type="HAMAP" id="MF_00366">
    <property type="entry name" value="RNApol_bact_RpoZ"/>
    <property type="match status" value="1"/>
</dbReference>
<dbReference type="InterPro" id="IPR003716">
    <property type="entry name" value="DNA-dir_RNA_pol_omega"/>
</dbReference>
<dbReference type="InterPro" id="IPR006110">
    <property type="entry name" value="Pol_omega/Rpo6/RPB6"/>
</dbReference>
<dbReference type="InterPro" id="IPR036161">
    <property type="entry name" value="RPB6/omega-like_sf"/>
</dbReference>
<dbReference type="NCBIfam" id="TIGR00690">
    <property type="entry name" value="rpoZ"/>
    <property type="match status" value="1"/>
</dbReference>
<dbReference type="PANTHER" id="PTHR34476">
    <property type="entry name" value="DNA-DIRECTED RNA POLYMERASE SUBUNIT OMEGA"/>
    <property type="match status" value="1"/>
</dbReference>
<dbReference type="PANTHER" id="PTHR34476:SF1">
    <property type="entry name" value="DNA-DIRECTED RNA POLYMERASE SUBUNIT OMEGA"/>
    <property type="match status" value="1"/>
</dbReference>
<dbReference type="Pfam" id="PF01192">
    <property type="entry name" value="RNA_pol_Rpb6"/>
    <property type="match status" value="1"/>
</dbReference>
<dbReference type="SMART" id="SM01409">
    <property type="entry name" value="RNA_pol_Rpb6"/>
    <property type="match status" value="1"/>
</dbReference>
<dbReference type="SUPFAM" id="SSF63562">
    <property type="entry name" value="RPB6/omega subunit-like"/>
    <property type="match status" value="1"/>
</dbReference>
<name>RPOZ_STACT</name>
<sequence>MLYPPLNQLTSKVSSKYLIATVAAKRARELYDKPETALLEHYHSVKTVGKALEEIAAGKITPIEPELNESEFETKD</sequence>
<comment type="function">
    <text evidence="1">Promotes RNA polymerase assembly. Latches the N- and C-terminal regions of the beta' subunit thereby facilitating its interaction with the beta and alpha subunits.</text>
</comment>
<comment type="catalytic activity">
    <reaction evidence="1">
        <text>RNA(n) + a ribonucleoside 5'-triphosphate = RNA(n+1) + diphosphate</text>
        <dbReference type="Rhea" id="RHEA:21248"/>
        <dbReference type="Rhea" id="RHEA-COMP:14527"/>
        <dbReference type="Rhea" id="RHEA-COMP:17342"/>
        <dbReference type="ChEBI" id="CHEBI:33019"/>
        <dbReference type="ChEBI" id="CHEBI:61557"/>
        <dbReference type="ChEBI" id="CHEBI:140395"/>
        <dbReference type="EC" id="2.7.7.6"/>
    </reaction>
</comment>
<comment type="subunit">
    <text evidence="1">The RNAP catalytic core consists of 2 alpha, 1 beta, 1 beta' and 1 omega subunit. When a sigma factor is associated with the core the holoenzyme is formed, which can initiate transcription.</text>
</comment>
<comment type="similarity">
    <text evidence="1">Belongs to the RNA polymerase subunit omega family.</text>
</comment>
<protein>
    <recommendedName>
        <fullName evidence="1">DNA-directed RNA polymerase subunit omega</fullName>
        <shortName evidence="1">RNAP omega subunit</shortName>
        <ecNumber evidence="1">2.7.7.6</ecNumber>
    </recommendedName>
    <alternativeName>
        <fullName evidence="1">RNA polymerase omega subunit</fullName>
    </alternativeName>
    <alternativeName>
        <fullName evidence="1">Transcriptase subunit omega</fullName>
    </alternativeName>
</protein>
<feature type="chain" id="PRO_1000194811" description="DNA-directed RNA polymerase subunit omega">
    <location>
        <begin position="1"/>
        <end position="76"/>
    </location>
</feature>
<evidence type="ECO:0000255" key="1">
    <source>
        <dbReference type="HAMAP-Rule" id="MF_00366"/>
    </source>
</evidence>
<proteinExistence type="inferred from homology"/>